<keyword id="KW-0946">Virion</keyword>
<comment type="function">
    <text evidence="1">Structural protein that is not essential for the viral replication either in tissue culture or in its natural host.</text>
</comment>
<comment type="subcellular location">
    <subcellularLocation>
        <location evidence="1">Virion</location>
    </subcellularLocation>
</comment>
<comment type="miscellaneous">
    <text>The gene encoding this protein is included within the N gene (alternative ORF).</text>
</comment>
<comment type="similarity">
    <text evidence="2">Belongs to the coronavirus I protein family.</text>
</comment>
<organism>
    <name type="scientific">Porcine hemagglutinating encephalomyelitis virus (strain IAF-404)</name>
    <name type="common">HEV</name>
    <dbReference type="NCBI Taxonomy" id="230236"/>
    <lineage>
        <taxon>Viruses</taxon>
        <taxon>Riboviria</taxon>
        <taxon>Orthornavirae</taxon>
        <taxon>Pisuviricota</taxon>
        <taxon>Pisoniviricetes</taxon>
        <taxon>Nidovirales</taxon>
        <taxon>Cornidovirineae</taxon>
        <taxon>Coronaviridae</taxon>
        <taxon>Orthocoronavirinae</taxon>
        <taxon>Betacoronavirus</taxon>
        <taxon>Embecovirus</taxon>
        <taxon>Betacoronavirus 1</taxon>
    </lineage>
</organism>
<feature type="chain" id="PRO_0000284101" description="Protein I">
    <location>
        <begin position="1"/>
        <end position="207"/>
    </location>
</feature>
<gene>
    <name type="primary">N</name>
    <name type="synonym">I</name>
</gene>
<organismHost>
    <name type="scientific">Sus scrofa</name>
    <name type="common">Pig</name>
    <dbReference type="NCBI Taxonomy" id="9823"/>
</organismHost>
<name>IORF_CVPIA</name>
<dbReference type="EMBL" id="AF481863">
    <property type="protein sequence ID" value="AAM77006.1"/>
    <property type="molecule type" value="Genomic_RNA"/>
</dbReference>
<dbReference type="SMR" id="Q8JSP3"/>
<dbReference type="Proteomes" id="UP000007543">
    <property type="component" value="Genome"/>
</dbReference>
<dbReference type="GO" id="GO:0044423">
    <property type="term" value="C:virion component"/>
    <property type="evidence" value="ECO:0007669"/>
    <property type="project" value="UniProtKB-KW"/>
</dbReference>
<dbReference type="CDD" id="cd21662">
    <property type="entry name" value="embe-CoV_Protein-I_like"/>
    <property type="match status" value="1"/>
</dbReference>
<dbReference type="InterPro" id="IPR004876">
    <property type="entry name" value="Corona_nucI"/>
</dbReference>
<dbReference type="InterPro" id="IPR044311">
    <property type="entry name" value="N2-like_embe-CoV"/>
</dbReference>
<dbReference type="Pfam" id="PF03187">
    <property type="entry name" value="Corona_I"/>
    <property type="match status" value="1"/>
</dbReference>
<evidence type="ECO:0000250" key="1"/>
<evidence type="ECO:0000305" key="2"/>
<sequence length="207" mass="22967">MASLSGPISPTSLEMFKPGVEEFNPSKLLLLSNHQEGLLYPTILGSLELLSFKKERSLNLQRDKVCLLHQESQLLKLRGTGTDTTDVLLKQPMAISVNCCHDGTFTTWEQDRMPNTSTAPTLTESSGSLVTRLILIPRLTLSIGIQVAMRLFRLGFRLARYSLKVTILKAQEGLLLIPDLLRAHPIEPLVQDHVVEPILAIEPPPLV</sequence>
<accession>Q8JSP3</accession>
<protein>
    <recommendedName>
        <fullName>Protein I</fullName>
    </recommendedName>
    <alternativeName>
        <fullName>Accessory protein N2</fullName>
    </alternativeName>
    <alternativeName>
        <fullName>N internal ORF protein</fullName>
        <shortName>IORF</shortName>
    </alternativeName>
    <alternativeName>
        <fullName>Protein in nucleocapsid ORF</fullName>
    </alternativeName>
</protein>
<proteinExistence type="inferred from homology"/>
<reference key="1">
    <citation type="journal article" date="2002" name="J. Gen. Virol.">
        <title>Sequence of the 3'-terminal end (8.1 kb) of the genome of porcine haemagglutinating encephalomyelitis virus: comparison with other haemagglutinating coronaviruses.</title>
        <authorList>
            <person name="Sasseville A.M.-J."/>
            <person name="Boutin M."/>
            <person name="Gelinas A.-M."/>
            <person name="Dea S."/>
        </authorList>
    </citation>
    <scope>NUCLEOTIDE SEQUENCE [GENOMIC RNA]</scope>
</reference>